<reference key="1">
    <citation type="submission" date="2008-01" db="EMBL/GenBank/DDBJ databases">
        <title>Complete sequence of Thermoanaerobacter pseudethanolicus 39E.</title>
        <authorList>
            <person name="Copeland A."/>
            <person name="Lucas S."/>
            <person name="Lapidus A."/>
            <person name="Barry K."/>
            <person name="Glavina del Rio T."/>
            <person name="Dalin E."/>
            <person name="Tice H."/>
            <person name="Pitluck S."/>
            <person name="Bruce D."/>
            <person name="Goodwin L."/>
            <person name="Saunders E."/>
            <person name="Brettin T."/>
            <person name="Detter J.C."/>
            <person name="Han C."/>
            <person name="Schmutz J."/>
            <person name="Larimer F."/>
            <person name="Land M."/>
            <person name="Hauser L."/>
            <person name="Kyrpides N."/>
            <person name="Lykidis A."/>
            <person name="Hemme C."/>
            <person name="Fields M.W."/>
            <person name="He Z."/>
            <person name="Zhou J."/>
            <person name="Richardson P."/>
        </authorList>
    </citation>
    <scope>NUCLEOTIDE SEQUENCE [LARGE SCALE GENOMIC DNA]</scope>
    <source>
        <strain>ATCC 33223 / DSM 2355 / 39E</strain>
    </source>
</reference>
<evidence type="ECO:0000255" key="1">
    <source>
        <dbReference type="HAMAP-Rule" id="MF_01345"/>
    </source>
</evidence>
<evidence type="ECO:0000305" key="2"/>
<organism>
    <name type="scientific">Thermoanaerobacter pseudethanolicus (strain ATCC 33223 / 39E)</name>
    <name type="common">Clostridium thermohydrosulfuricum</name>
    <dbReference type="NCBI Taxonomy" id="340099"/>
    <lineage>
        <taxon>Bacteria</taxon>
        <taxon>Bacillati</taxon>
        <taxon>Bacillota</taxon>
        <taxon>Clostridia</taxon>
        <taxon>Thermoanaerobacterales</taxon>
        <taxon>Thermoanaerobacteraceae</taxon>
        <taxon>Thermoanaerobacter</taxon>
    </lineage>
</organism>
<dbReference type="EMBL" id="CP000924">
    <property type="protein sequence ID" value="ABY94052.1"/>
    <property type="molecule type" value="Genomic_DNA"/>
</dbReference>
<dbReference type="RefSeq" id="WP_003868569.1">
    <property type="nucleotide sequence ID" value="NC_010321.1"/>
</dbReference>
<dbReference type="SMR" id="B0KCK9"/>
<dbReference type="STRING" id="340099.Teth39_0383"/>
<dbReference type="KEGG" id="tpd:Teth39_0383"/>
<dbReference type="eggNOG" id="COG0186">
    <property type="taxonomic scope" value="Bacteria"/>
</dbReference>
<dbReference type="HOGENOM" id="CLU_073626_1_0_9"/>
<dbReference type="Proteomes" id="UP000002156">
    <property type="component" value="Chromosome"/>
</dbReference>
<dbReference type="GO" id="GO:0022627">
    <property type="term" value="C:cytosolic small ribosomal subunit"/>
    <property type="evidence" value="ECO:0007669"/>
    <property type="project" value="TreeGrafter"/>
</dbReference>
<dbReference type="GO" id="GO:0019843">
    <property type="term" value="F:rRNA binding"/>
    <property type="evidence" value="ECO:0007669"/>
    <property type="project" value="UniProtKB-UniRule"/>
</dbReference>
<dbReference type="GO" id="GO:0003735">
    <property type="term" value="F:structural constituent of ribosome"/>
    <property type="evidence" value="ECO:0007669"/>
    <property type="project" value="InterPro"/>
</dbReference>
<dbReference type="GO" id="GO:0006412">
    <property type="term" value="P:translation"/>
    <property type="evidence" value="ECO:0007669"/>
    <property type="project" value="UniProtKB-UniRule"/>
</dbReference>
<dbReference type="CDD" id="cd00364">
    <property type="entry name" value="Ribosomal_uS17"/>
    <property type="match status" value="1"/>
</dbReference>
<dbReference type="FunFam" id="2.40.50.140:FF:000123">
    <property type="entry name" value="30S ribosomal protein S17"/>
    <property type="match status" value="1"/>
</dbReference>
<dbReference type="Gene3D" id="2.40.50.140">
    <property type="entry name" value="Nucleic acid-binding proteins"/>
    <property type="match status" value="1"/>
</dbReference>
<dbReference type="HAMAP" id="MF_01345_B">
    <property type="entry name" value="Ribosomal_uS17_B"/>
    <property type="match status" value="1"/>
</dbReference>
<dbReference type="InterPro" id="IPR012340">
    <property type="entry name" value="NA-bd_OB-fold"/>
</dbReference>
<dbReference type="InterPro" id="IPR000266">
    <property type="entry name" value="Ribosomal_uS17"/>
</dbReference>
<dbReference type="InterPro" id="IPR019984">
    <property type="entry name" value="Ribosomal_uS17_bact/chlr"/>
</dbReference>
<dbReference type="InterPro" id="IPR019979">
    <property type="entry name" value="Ribosomal_uS17_CS"/>
</dbReference>
<dbReference type="NCBIfam" id="NF004123">
    <property type="entry name" value="PRK05610.1"/>
    <property type="match status" value="1"/>
</dbReference>
<dbReference type="NCBIfam" id="TIGR03635">
    <property type="entry name" value="uS17_bact"/>
    <property type="match status" value="1"/>
</dbReference>
<dbReference type="PANTHER" id="PTHR10744">
    <property type="entry name" value="40S RIBOSOMAL PROTEIN S11 FAMILY MEMBER"/>
    <property type="match status" value="1"/>
</dbReference>
<dbReference type="PANTHER" id="PTHR10744:SF1">
    <property type="entry name" value="SMALL RIBOSOMAL SUBUNIT PROTEIN US17M"/>
    <property type="match status" value="1"/>
</dbReference>
<dbReference type="Pfam" id="PF00366">
    <property type="entry name" value="Ribosomal_S17"/>
    <property type="match status" value="1"/>
</dbReference>
<dbReference type="PRINTS" id="PR00973">
    <property type="entry name" value="RIBOSOMALS17"/>
</dbReference>
<dbReference type="SUPFAM" id="SSF50249">
    <property type="entry name" value="Nucleic acid-binding proteins"/>
    <property type="match status" value="1"/>
</dbReference>
<dbReference type="PROSITE" id="PS00056">
    <property type="entry name" value="RIBOSOMAL_S17"/>
    <property type="match status" value="1"/>
</dbReference>
<comment type="function">
    <text evidence="1">One of the primary rRNA binding proteins, it binds specifically to the 5'-end of 16S ribosomal RNA.</text>
</comment>
<comment type="subunit">
    <text evidence="1">Part of the 30S ribosomal subunit.</text>
</comment>
<comment type="similarity">
    <text evidence="1">Belongs to the universal ribosomal protein uS17 family.</text>
</comment>
<gene>
    <name evidence="1" type="primary">rpsQ</name>
    <name type="ordered locus">Teth39_0383</name>
</gene>
<keyword id="KW-1185">Reference proteome</keyword>
<keyword id="KW-0687">Ribonucleoprotein</keyword>
<keyword id="KW-0689">Ribosomal protein</keyword>
<keyword id="KW-0694">RNA-binding</keyword>
<keyword id="KW-0699">rRNA-binding</keyword>
<name>RS17_THEP3</name>
<proteinExistence type="inferred from homology"/>
<accession>B0KCK9</accession>
<protein>
    <recommendedName>
        <fullName evidence="1">Small ribosomal subunit protein uS17</fullName>
    </recommendedName>
    <alternativeName>
        <fullName evidence="2">30S ribosomal protein S17</fullName>
    </alternativeName>
</protein>
<feature type="chain" id="PRO_1000143315" description="Small ribosomal subunit protein uS17">
    <location>
        <begin position="1"/>
        <end position="84"/>
    </location>
</feature>
<sequence length="84" mass="9934">MERGYRKVRIGTVVSNKMQKTIVVAVEDRVRHPLYGKTIKRTKKFKVHDENNVCNVGDIVKIMETRPLSKEKRWRLVEIVKRAE</sequence>